<sequence length="502" mass="57631">MWSALFSHLREVHKRSGVKEEKLIMKSPPAAGEAGCHKPQATATNKMTVLQSPLGLRTILTSLVAFFIVVSSVSLLFDRGQDAQAQLAVEQHQHQEVLLKQKPASAAVGEQKSVVVDQSSLRSQEAQVQWTSELQDVATDSGDGGFDGEEDCNWSLGRWVYDNASRPLYSGLKCSFIFDEVACDKYGRNDTKYQHWRWQPHGCNLPRFNATKFLEKLRNKRLVFVGDSVNRNQWVSMVCMVEHFIPDGRKMRVYNGSLISFKAFEYNATIDFYWSPLLLESNSDNPIIHRVEYRIIRADRIEKHANVWKDADFIVFNSYLWWRKQRDGMMMKVMYGSFEDGDAKLDEVQMVDGYEIALKKLTEYLGANINKNKTRIFFAGSSPAHSWASNWGGDDNNKCLNETEPIQIEDYRSATTDYGMMDKAKEIFGTLEPKGIHVQILNITQLSEYRKDAHPTIFRRQYVPLTKEQIANPSIYADCTHWCLPGVPDVWNEFLYAYIMHK</sequence>
<protein>
    <recommendedName>
        <fullName evidence="7">Xylan O-acetyltransferase 13</fullName>
        <ecNumber evidence="5">2.3.1.-</ecNumber>
    </recommendedName>
    <alternativeName>
        <fullName evidence="6">Protein trichome birefringence-like 1</fullName>
        <shortName evidence="6">OsTBL1</shortName>
    </alternativeName>
</protein>
<gene>
    <name evidence="7" type="primary">XOAT13</name>
    <name evidence="6" type="synonym">TBL1</name>
    <name evidence="11" type="ordered locus">Os12g0106300</name>
    <name evidence="10" type="ordered locus">LOC_Os12g01560</name>
    <name evidence="12" type="ORF">OsJ_34935</name>
</gene>
<name>XOATD_ORYSJ</name>
<evidence type="ECO:0000250" key="1">
    <source>
        <dbReference type="UniProtKB" id="Q9LY46"/>
    </source>
</evidence>
<evidence type="ECO:0000255" key="2"/>
<evidence type="ECO:0000255" key="3">
    <source>
        <dbReference type="PROSITE-ProRule" id="PRU00498"/>
    </source>
</evidence>
<evidence type="ECO:0000269" key="4">
    <source>
    </source>
</evidence>
<evidence type="ECO:0000269" key="5">
    <source>
    </source>
</evidence>
<evidence type="ECO:0000303" key="6">
    <source>
    </source>
</evidence>
<evidence type="ECO:0000303" key="7">
    <source>
    </source>
</evidence>
<evidence type="ECO:0000305" key="8"/>
<evidence type="ECO:0000305" key="9">
    <source>
    </source>
</evidence>
<evidence type="ECO:0000312" key="10">
    <source>
        <dbReference type="EMBL" id="ABA95618.1"/>
    </source>
</evidence>
<evidence type="ECO:0000312" key="11">
    <source>
        <dbReference type="EMBL" id="BAT15503.1"/>
    </source>
</evidence>
<evidence type="ECO:0000312" key="12">
    <source>
        <dbReference type="EMBL" id="EEE52607.1"/>
    </source>
</evidence>
<proteinExistence type="evidence at protein level"/>
<organism>
    <name type="scientific">Oryza sativa subsp. japonica</name>
    <name type="common">Rice</name>
    <dbReference type="NCBI Taxonomy" id="39947"/>
    <lineage>
        <taxon>Eukaryota</taxon>
        <taxon>Viridiplantae</taxon>
        <taxon>Streptophyta</taxon>
        <taxon>Embryophyta</taxon>
        <taxon>Tracheophyta</taxon>
        <taxon>Spermatophyta</taxon>
        <taxon>Magnoliopsida</taxon>
        <taxon>Liliopsida</taxon>
        <taxon>Poales</taxon>
        <taxon>Poaceae</taxon>
        <taxon>BOP clade</taxon>
        <taxon>Oryzoideae</taxon>
        <taxon>Oryzeae</taxon>
        <taxon>Oryzinae</taxon>
        <taxon>Oryza</taxon>
        <taxon>Oryza sativa</taxon>
    </lineage>
</organism>
<keyword id="KW-1015">Disulfide bond</keyword>
<keyword id="KW-0325">Glycoprotein</keyword>
<keyword id="KW-0333">Golgi apparatus</keyword>
<keyword id="KW-0472">Membrane</keyword>
<keyword id="KW-0611">Plant defense</keyword>
<keyword id="KW-1185">Reference proteome</keyword>
<keyword id="KW-0735">Signal-anchor</keyword>
<keyword id="KW-0808">Transferase</keyword>
<keyword id="KW-0812">Transmembrane</keyword>
<keyword id="KW-1133">Transmembrane helix</keyword>
<reference key="1">
    <citation type="journal article" date="2018" name="Planta">
        <title>Biochemical characterization of rice xylan O-acetyltransferases.</title>
        <authorList>
            <person name="Zhong R."/>
            <person name="Cui D."/>
            <person name="Dasher R.L."/>
            <person name="Ye Z.H."/>
        </authorList>
    </citation>
    <scope>NUCLEOTIDE SEQUENCE [MRNA]</scope>
    <scope>FUNCTION</scope>
    <scope>CATALYTIC ACTIVITY</scope>
    <scope>BIOPHYSICOCHEMICAL PROPERTIES</scope>
</reference>
<reference key="2">
    <citation type="journal article" date="2005" name="BMC Biol.">
        <title>The sequence of rice chromosomes 11 and 12, rich in disease resistance genes and recent gene duplications.</title>
        <authorList>
            <consortium name="The rice chromosomes 11 and 12 sequencing consortia"/>
        </authorList>
    </citation>
    <scope>NUCLEOTIDE SEQUENCE [LARGE SCALE GENOMIC DNA]</scope>
    <source>
        <strain>cv. Nipponbare</strain>
    </source>
</reference>
<reference key="3">
    <citation type="journal article" date="2005" name="Nature">
        <title>The map-based sequence of the rice genome.</title>
        <authorList>
            <consortium name="International rice genome sequencing project (IRGSP)"/>
        </authorList>
    </citation>
    <scope>NUCLEOTIDE SEQUENCE [LARGE SCALE GENOMIC DNA]</scope>
    <source>
        <strain>cv. Nipponbare</strain>
    </source>
</reference>
<reference key="4">
    <citation type="journal article" date="2013" name="Rice">
        <title>Improvement of the Oryza sativa Nipponbare reference genome using next generation sequence and optical map data.</title>
        <authorList>
            <person name="Kawahara Y."/>
            <person name="de la Bastide M."/>
            <person name="Hamilton J.P."/>
            <person name="Kanamori H."/>
            <person name="McCombie W.R."/>
            <person name="Ouyang S."/>
            <person name="Schwartz D.C."/>
            <person name="Tanaka T."/>
            <person name="Wu J."/>
            <person name="Zhou S."/>
            <person name="Childs K.L."/>
            <person name="Davidson R.M."/>
            <person name="Lin H."/>
            <person name="Quesada-Ocampo L."/>
            <person name="Vaillancourt B."/>
            <person name="Sakai H."/>
            <person name="Lee S.S."/>
            <person name="Kim J."/>
            <person name="Numa H."/>
            <person name="Itoh T."/>
            <person name="Buell C.R."/>
            <person name="Matsumoto T."/>
        </authorList>
    </citation>
    <scope>GENOME REANNOTATION</scope>
    <source>
        <strain>cv. Nipponbare</strain>
    </source>
</reference>
<reference key="5">
    <citation type="journal article" date="2005" name="PLoS Biol.">
        <title>The genomes of Oryza sativa: a history of duplications.</title>
        <authorList>
            <person name="Yu J."/>
            <person name="Wang J."/>
            <person name="Lin W."/>
            <person name="Li S."/>
            <person name="Li H."/>
            <person name="Zhou J."/>
            <person name="Ni P."/>
            <person name="Dong W."/>
            <person name="Hu S."/>
            <person name="Zeng C."/>
            <person name="Zhang J."/>
            <person name="Zhang Y."/>
            <person name="Li R."/>
            <person name="Xu Z."/>
            <person name="Li S."/>
            <person name="Li X."/>
            <person name="Zheng H."/>
            <person name="Cong L."/>
            <person name="Lin L."/>
            <person name="Yin J."/>
            <person name="Geng J."/>
            <person name="Li G."/>
            <person name="Shi J."/>
            <person name="Liu J."/>
            <person name="Lv H."/>
            <person name="Li J."/>
            <person name="Wang J."/>
            <person name="Deng Y."/>
            <person name="Ran L."/>
            <person name="Shi X."/>
            <person name="Wang X."/>
            <person name="Wu Q."/>
            <person name="Li C."/>
            <person name="Ren X."/>
            <person name="Wang J."/>
            <person name="Wang X."/>
            <person name="Li D."/>
            <person name="Liu D."/>
            <person name="Zhang X."/>
            <person name="Ji Z."/>
            <person name="Zhao W."/>
            <person name="Sun Y."/>
            <person name="Zhang Z."/>
            <person name="Bao J."/>
            <person name="Han Y."/>
            <person name="Dong L."/>
            <person name="Ji J."/>
            <person name="Chen P."/>
            <person name="Wu S."/>
            <person name="Liu J."/>
            <person name="Xiao Y."/>
            <person name="Bu D."/>
            <person name="Tan J."/>
            <person name="Yang L."/>
            <person name="Ye C."/>
            <person name="Zhang J."/>
            <person name="Xu J."/>
            <person name="Zhou Y."/>
            <person name="Yu Y."/>
            <person name="Zhang B."/>
            <person name="Zhuang S."/>
            <person name="Wei H."/>
            <person name="Liu B."/>
            <person name="Lei M."/>
            <person name="Yu H."/>
            <person name="Li Y."/>
            <person name="Xu H."/>
            <person name="Wei S."/>
            <person name="He X."/>
            <person name="Fang L."/>
            <person name="Zhang Z."/>
            <person name="Zhang Y."/>
            <person name="Huang X."/>
            <person name="Su Z."/>
            <person name="Tong W."/>
            <person name="Li J."/>
            <person name="Tong Z."/>
            <person name="Li S."/>
            <person name="Ye J."/>
            <person name="Wang L."/>
            <person name="Fang L."/>
            <person name="Lei T."/>
            <person name="Chen C.-S."/>
            <person name="Chen H.-C."/>
            <person name="Xu Z."/>
            <person name="Li H."/>
            <person name="Huang H."/>
            <person name="Zhang F."/>
            <person name="Xu H."/>
            <person name="Li N."/>
            <person name="Zhao C."/>
            <person name="Li S."/>
            <person name="Dong L."/>
            <person name="Huang Y."/>
            <person name="Li L."/>
            <person name="Xi Y."/>
            <person name="Qi Q."/>
            <person name="Li W."/>
            <person name="Zhang B."/>
            <person name="Hu W."/>
            <person name="Zhang Y."/>
            <person name="Tian X."/>
            <person name="Jiao Y."/>
            <person name="Liang X."/>
            <person name="Jin J."/>
            <person name="Gao L."/>
            <person name="Zheng W."/>
            <person name="Hao B."/>
            <person name="Liu S.-M."/>
            <person name="Wang W."/>
            <person name="Yuan L."/>
            <person name="Cao M."/>
            <person name="McDermott J."/>
            <person name="Samudrala R."/>
            <person name="Wang J."/>
            <person name="Wong G.K.-S."/>
            <person name="Yang H."/>
        </authorList>
    </citation>
    <scope>NUCLEOTIDE SEQUENCE [LARGE SCALE GENOMIC DNA]</scope>
    <source>
        <strain>cv. Nipponbare</strain>
    </source>
</reference>
<reference key="6">
    <citation type="journal article" date="2003" name="Science">
        <title>Collection, mapping, and annotation of over 28,000 cDNA clones from japonica rice.</title>
        <authorList>
            <consortium name="The rice full-length cDNA consortium"/>
        </authorList>
    </citation>
    <scope>NUCLEOTIDE SEQUENCE [LARGE SCALE MRNA]</scope>
    <source>
        <strain>cv. Nipponbare</strain>
    </source>
</reference>
<reference key="7">
    <citation type="journal article" date="2017" name="Plant Physiol.">
        <title>Two trichome birefringence-like proteins mediate xylan acetylation, which is essential for leaf blight resistance in rice.</title>
        <authorList>
            <person name="Gao Y."/>
            <person name="He C."/>
            <person name="Zhang D."/>
            <person name="Liu X."/>
            <person name="Xu Z."/>
            <person name="Tian Y."/>
            <person name="Liu X.H."/>
            <person name="Zang S."/>
            <person name="Pauly M."/>
            <person name="Zhou Y."/>
            <person name="Zhang B."/>
        </authorList>
    </citation>
    <scope>FUNCTION</scope>
    <scope>BIOPHYSICOCHEMICAL PROPERTIES</scope>
    <scope>SUBCELLULAR LOCATION</scope>
    <scope>GENE FAMILY</scope>
    <scope>NOMENCLATURE</scope>
    <scope>DISRUPTION PHENOTYPE</scope>
</reference>
<feature type="chain" id="PRO_0000454036" description="Xylan O-acetyltransferase 13">
    <location>
        <begin position="1"/>
        <end position="502"/>
    </location>
</feature>
<feature type="topological domain" description="Cytoplasmic" evidence="8">
    <location>
        <begin position="1"/>
        <end position="53"/>
    </location>
</feature>
<feature type="transmembrane region" description="Helical; Signal-anchor for type II membrane protein" evidence="2">
    <location>
        <begin position="54"/>
        <end position="76"/>
    </location>
</feature>
<feature type="topological domain" description="Lumenal" evidence="8">
    <location>
        <begin position="77"/>
        <end position="502"/>
    </location>
</feature>
<feature type="short sequence motif" description="GDS motif" evidence="9">
    <location>
        <begin position="226"/>
        <end position="228"/>
    </location>
</feature>
<feature type="short sequence motif" description="DXXH motif" evidence="9">
    <location>
        <begin position="478"/>
        <end position="481"/>
    </location>
</feature>
<feature type="active site" description="Nucleophile" evidence="1">
    <location>
        <position position="228"/>
    </location>
</feature>
<feature type="active site" description="Proton donor" evidence="1">
    <location>
        <position position="478"/>
    </location>
</feature>
<feature type="active site" description="Proton acceptor" evidence="1">
    <location>
        <position position="481"/>
    </location>
</feature>
<feature type="glycosylation site" description="N-linked (GlcNAc...) asparagine" evidence="3">
    <location>
        <position position="153"/>
    </location>
</feature>
<feature type="glycosylation site" description="N-linked (GlcNAc...) asparagine" evidence="3">
    <location>
        <position position="163"/>
    </location>
</feature>
<feature type="glycosylation site" description="N-linked (GlcNAc...) asparagine" evidence="3">
    <location>
        <position position="189"/>
    </location>
</feature>
<feature type="glycosylation site" description="N-linked (GlcNAc...) asparagine" evidence="3">
    <location>
        <position position="209"/>
    </location>
</feature>
<feature type="glycosylation site" description="N-linked (GlcNAc...) asparagine" evidence="3">
    <location>
        <position position="255"/>
    </location>
</feature>
<feature type="glycosylation site" description="N-linked (GlcNAc...) asparagine" evidence="3">
    <location>
        <position position="267"/>
    </location>
</feature>
<feature type="glycosylation site" description="N-linked (GlcNAc...) asparagine" evidence="3">
    <location>
        <position position="372"/>
    </location>
</feature>
<feature type="glycosylation site" description="N-linked (GlcNAc...) asparagine" evidence="3">
    <location>
        <position position="401"/>
    </location>
</feature>
<feature type="glycosylation site" description="N-linked (GlcNAc...) asparagine" evidence="3">
    <location>
        <position position="442"/>
    </location>
</feature>
<feature type="disulfide bond" evidence="1">
    <location>
        <begin position="152"/>
        <end position="203"/>
    </location>
</feature>
<feature type="disulfide bond" evidence="1">
    <location>
        <begin position="174"/>
        <end position="239"/>
    </location>
</feature>
<feature type="disulfide bond" evidence="1">
    <location>
        <begin position="183"/>
        <end position="483"/>
    </location>
</feature>
<feature type="disulfide bond" evidence="1">
    <location>
        <begin position="399"/>
        <end position="479"/>
    </location>
</feature>
<accession>Q2QYU2</accession>
<accession>Q0IQQ7</accession>
<dbReference type="EC" id="2.3.1.-" evidence="5"/>
<dbReference type="EMBL" id="MH037027">
    <property type="protein sequence ID" value="AVR54517.1"/>
    <property type="molecule type" value="mRNA"/>
</dbReference>
<dbReference type="EMBL" id="DP000011">
    <property type="protein sequence ID" value="ABA95618.1"/>
    <property type="molecule type" value="Genomic_DNA"/>
</dbReference>
<dbReference type="EMBL" id="AP014968">
    <property type="protein sequence ID" value="BAT15503.1"/>
    <property type="molecule type" value="Genomic_DNA"/>
</dbReference>
<dbReference type="EMBL" id="CM000149">
    <property type="protein sequence ID" value="EEE52607.1"/>
    <property type="molecule type" value="Genomic_DNA"/>
</dbReference>
<dbReference type="EMBL" id="AK060755">
    <property type="protein sequence ID" value="BAG87557.1"/>
    <property type="molecule type" value="mRNA"/>
</dbReference>
<dbReference type="SMR" id="Q2QYU2"/>
<dbReference type="FunCoup" id="Q2QYU2">
    <property type="interactions" value="1"/>
</dbReference>
<dbReference type="GlyCosmos" id="Q2QYU2">
    <property type="glycosylation" value="9 sites, No reported glycans"/>
</dbReference>
<dbReference type="PaxDb" id="39947-Q2QYU2"/>
<dbReference type="EnsemblPlants" id="Os12t0106300-01">
    <property type="protein sequence ID" value="Os12t0106300-01"/>
    <property type="gene ID" value="Os12g0106300"/>
</dbReference>
<dbReference type="GeneID" id="4351267"/>
<dbReference type="Gramene" id="Os12t0106300-01">
    <property type="protein sequence ID" value="Os12t0106300-01"/>
    <property type="gene ID" value="Os12g0106300"/>
</dbReference>
<dbReference type="KEGG" id="osa:4351267"/>
<dbReference type="eggNOG" id="ENOG502SHUB">
    <property type="taxonomic scope" value="Eukaryota"/>
</dbReference>
<dbReference type="HOGENOM" id="CLU_020953_3_1_1"/>
<dbReference type="InParanoid" id="Q2QYU2"/>
<dbReference type="OMA" id="KQNCYGE"/>
<dbReference type="OrthoDB" id="585788at2759"/>
<dbReference type="Proteomes" id="UP000007752">
    <property type="component" value="Chromosome 12"/>
</dbReference>
<dbReference type="Proteomes" id="UP000059680">
    <property type="component" value="Chromosome 12"/>
</dbReference>
<dbReference type="GO" id="GO:0005794">
    <property type="term" value="C:Golgi apparatus"/>
    <property type="evidence" value="ECO:0000318"/>
    <property type="project" value="GO_Central"/>
</dbReference>
<dbReference type="GO" id="GO:0000139">
    <property type="term" value="C:Golgi membrane"/>
    <property type="evidence" value="ECO:0000314"/>
    <property type="project" value="UniProtKB"/>
</dbReference>
<dbReference type="GO" id="GO:0016413">
    <property type="term" value="F:O-acetyltransferase activity"/>
    <property type="evidence" value="ECO:0000318"/>
    <property type="project" value="GO_Central"/>
</dbReference>
<dbReference type="GO" id="GO:1990538">
    <property type="term" value="F:xylan O-acetyltransferase activity"/>
    <property type="evidence" value="ECO:0000314"/>
    <property type="project" value="UniProtKB"/>
</dbReference>
<dbReference type="GO" id="GO:0006952">
    <property type="term" value="P:defense response"/>
    <property type="evidence" value="ECO:0007669"/>
    <property type="project" value="UniProtKB-KW"/>
</dbReference>
<dbReference type="GO" id="GO:1990937">
    <property type="term" value="P:xylan acetylation"/>
    <property type="evidence" value="ECO:0000314"/>
    <property type="project" value="UniProtKB"/>
</dbReference>
<dbReference type="InterPro" id="IPR029962">
    <property type="entry name" value="TBL"/>
</dbReference>
<dbReference type="InterPro" id="IPR026057">
    <property type="entry name" value="TBL_C"/>
</dbReference>
<dbReference type="InterPro" id="IPR025846">
    <property type="entry name" value="TBL_N"/>
</dbReference>
<dbReference type="PANTHER" id="PTHR32285">
    <property type="entry name" value="PROTEIN TRICHOME BIREFRINGENCE-LIKE 9-RELATED"/>
    <property type="match status" value="1"/>
</dbReference>
<dbReference type="PANTHER" id="PTHR32285:SF197">
    <property type="entry name" value="XYLAN O-ACETYLTRANSFERASE 12"/>
    <property type="match status" value="1"/>
</dbReference>
<dbReference type="Pfam" id="PF13839">
    <property type="entry name" value="PC-Esterase"/>
    <property type="match status" value="1"/>
</dbReference>
<dbReference type="Pfam" id="PF14416">
    <property type="entry name" value="PMR5N"/>
    <property type="match status" value="1"/>
</dbReference>
<comment type="function">
    <text evidence="1 4 5">Xylan acetyltransferase required for 2-O- and 3-O-monoacetylation of xylosyl residues in xylan (PubMed:27864442, PubMed:29569182). Catalyzes the 2-O-acetylation of xylan, followed by nonenzymatic acetyl migration to the O-3 position, resulting in products that are monoacetylated at both O-2 and O-3 positions (By similarity).</text>
</comment>
<comment type="biophysicochemical properties">
    <kinetics>
        <KM evidence="5">1.56 mM for xylohexaose</KM>
        <KM evidence="4">4.98 mM for xylopentaose</KM>
        <Vmax evidence="5">47.4 pmol/min/mg enzyme with xylohexaose as substrate</Vmax>
    </kinetics>
</comment>
<comment type="subcellular location">
    <subcellularLocation>
        <location evidence="5">Golgi apparatus membrane</location>
        <topology evidence="2">Single-pass type II membrane protein</topology>
    </subcellularLocation>
</comment>
<comment type="disruption phenotype">
    <text evidence="4">Stunted growth and reduced plant height (PubMed:27864442). The double mutants tbl1 and tbl2 exhibit increased susceptibility to the bacterial pathogen Xanthomonas oryzae pv oryzae (Xoo) (PubMed:27864442).</text>
</comment>
<comment type="similarity">
    <text evidence="8">Belongs to the PC-esterase family. TBL subfamily.</text>
</comment>